<dbReference type="EC" id="6.1.1.7" evidence="1"/>
<dbReference type="EMBL" id="CP000109">
    <property type="protein sequence ID" value="ABB42182.1"/>
    <property type="molecule type" value="Genomic_DNA"/>
</dbReference>
<dbReference type="SMR" id="Q31F91"/>
<dbReference type="STRING" id="317025.Tcr_1590"/>
<dbReference type="KEGG" id="tcx:Tcr_1590"/>
<dbReference type="eggNOG" id="COG0013">
    <property type="taxonomic scope" value="Bacteria"/>
</dbReference>
<dbReference type="HOGENOM" id="CLU_004485_1_1_6"/>
<dbReference type="OrthoDB" id="9803884at2"/>
<dbReference type="GO" id="GO:0005829">
    <property type="term" value="C:cytosol"/>
    <property type="evidence" value="ECO:0007669"/>
    <property type="project" value="TreeGrafter"/>
</dbReference>
<dbReference type="GO" id="GO:0004813">
    <property type="term" value="F:alanine-tRNA ligase activity"/>
    <property type="evidence" value="ECO:0007669"/>
    <property type="project" value="UniProtKB-UniRule"/>
</dbReference>
<dbReference type="GO" id="GO:0002161">
    <property type="term" value="F:aminoacyl-tRNA deacylase activity"/>
    <property type="evidence" value="ECO:0007669"/>
    <property type="project" value="TreeGrafter"/>
</dbReference>
<dbReference type="GO" id="GO:0005524">
    <property type="term" value="F:ATP binding"/>
    <property type="evidence" value="ECO:0007669"/>
    <property type="project" value="UniProtKB-UniRule"/>
</dbReference>
<dbReference type="GO" id="GO:0000049">
    <property type="term" value="F:tRNA binding"/>
    <property type="evidence" value="ECO:0007669"/>
    <property type="project" value="UniProtKB-KW"/>
</dbReference>
<dbReference type="GO" id="GO:0008270">
    <property type="term" value="F:zinc ion binding"/>
    <property type="evidence" value="ECO:0007669"/>
    <property type="project" value="UniProtKB-UniRule"/>
</dbReference>
<dbReference type="GO" id="GO:0006419">
    <property type="term" value="P:alanyl-tRNA aminoacylation"/>
    <property type="evidence" value="ECO:0007669"/>
    <property type="project" value="UniProtKB-UniRule"/>
</dbReference>
<dbReference type="GO" id="GO:0045892">
    <property type="term" value="P:negative regulation of DNA-templated transcription"/>
    <property type="evidence" value="ECO:0007669"/>
    <property type="project" value="TreeGrafter"/>
</dbReference>
<dbReference type="CDD" id="cd00673">
    <property type="entry name" value="AlaRS_core"/>
    <property type="match status" value="1"/>
</dbReference>
<dbReference type="FunFam" id="2.40.30.130:FF:000001">
    <property type="entry name" value="Alanine--tRNA ligase"/>
    <property type="match status" value="1"/>
</dbReference>
<dbReference type="FunFam" id="3.10.310.40:FF:000001">
    <property type="entry name" value="Alanine--tRNA ligase"/>
    <property type="match status" value="1"/>
</dbReference>
<dbReference type="FunFam" id="3.30.54.20:FF:000001">
    <property type="entry name" value="Alanine--tRNA ligase"/>
    <property type="match status" value="1"/>
</dbReference>
<dbReference type="FunFam" id="3.30.930.10:FF:000004">
    <property type="entry name" value="Alanine--tRNA ligase"/>
    <property type="match status" value="1"/>
</dbReference>
<dbReference type="FunFam" id="3.30.980.10:FF:000004">
    <property type="entry name" value="Alanine--tRNA ligase, cytoplasmic"/>
    <property type="match status" value="1"/>
</dbReference>
<dbReference type="Gene3D" id="2.40.30.130">
    <property type="match status" value="1"/>
</dbReference>
<dbReference type="Gene3D" id="3.10.310.40">
    <property type="match status" value="1"/>
</dbReference>
<dbReference type="Gene3D" id="3.30.54.20">
    <property type="match status" value="1"/>
</dbReference>
<dbReference type="Gene3D" id="6.10.250.550">
    <property type="match status" value="1"/>
</dbReference>
<dbReference type="Gene3D" id="3.30.930.10">
    <property type="entry name" value="Bira Bifunctional Protein, Domain 2"/>
    <property type="match status" value="1"/>
</dbReference>
<dbReference type="Gene3D" id="3.30.980.10">
    <property type="entry name" value="Threonyl-trna Synthetase, Chain A, domain 2"/>
    <property type="match status" value="1"/>
</dbReference>
<dbReference type="HAMAP" id="MF_00036_B">
    <property type="entry name" value="Ala_tRNA_synth_B"/>
    <property type="match status" value="1"/>
</dbReference>
<dbReference type="InterPro" id="IPR045864">
    <property type="entry name" value="aa-tRNA-synth_II/BPL/LPL"/>
</dbReference>
<dbReference type="InterPro" id="IPR002318">
    <property type="entry name" value="Ala-tRNA-lgiase_IIc"/>
</dbReference>
<dbReference type="InterPro" id="IPR018162">
    <property type="entry name" value="Ala-tRNA-ligase_IIc_anticod-bd"/>
</dbReference>
<dbReference type="InterPro" id="IPR018165">
    <property type="entry name" value="Ala-tRNA-synth_IIc_core"/>
</dbReference>
<dbReference type="InterPro" id="IPR018164">
    <property type="entry name" value="Ala-tRNA-synth_IIc_N"/>
</dbReference>
<dbReference type="InterPro" id="IPR050058">
    <property type="entry name" value="Ala-tRNA_ligase"/>
</dbReference>
<dbReference type="InterPro" id="IPR023033">
    <property type="entry name" value="Ala_tRNA_ligase_euk/bac"/>
</dbReference>
<dbReference type="InterPro" id="IPR003156">
    <property type="entry name" value="DHHA1_dom"/>
</dbReference>
<dbReference type="InterPro" id="IPR018163">
    <property type="entry name" value="Thr/Ala-tRNA-synth_IIc_edit"/>
</dbReference>
<dbReference type="InterPro" id="IPR009000">
    <property type="entry name" value="Transl_B-barrel_sf"/>
</dbReference>
<dbReference type="InterPro" id="IPR012947">
    <property type="entry name" value="tRNA_SAD"/>
</dbReference>
<dbReference type="NCBIfam" id="TIGR00344">
    <property type="entry name" value="alaS"/>
    <property type="match status" value="1"/>
</dbReference>
<dbReference type="PANTHER" id="PTHR11777:SF9">
    <property type="entry name" value="ALANINE--TRNA LIGASE, CYTOPLASMIC"/>
    <property type="match status" value="1"/>
</dbReference>
<dbReference type="PANTHER" id="PTHR11777">
    <property type="entry name" value="ALANYL-TRNA SYNTHETASE"/>
    <property type="match status" value="1"/>
</dbReference>
<dbReference type="Pfam" id="PF02272">
    <property type="entry name" value="DHHA1"/>
    <property type="match status" value="1"/>
</dbReference>
<dbReference type="Pfam" id="PF01411">
    <property type="entry name" value="tRNA-synt_2c"/>
    <property type="match status" value="1"/>
</dbReference>
<dbReference type="Pfam" id="PF07973">
    <property type="entry name" value="tRNA_SAD"/>
    <property type="match status" value="1"/>
</dbReference>
<dbReference type="PRINTS" id="PR00980">
    <property type="entry name" value="TRNASYNTHALA"/>
</dbReference>
<dbReference type="SMART" id="SM00863">
    <property type="entry name" value="tRNA_SAD"/>
    <property type="match status" value="1"/>
</dbReference>
<dbReference type="SUPFAM" id="SSF55681">
    <property type="entry name" value="Class II aaRS and biotin synthetases"/>
    <property type="match status" value="1"/>
</dbReference>
<dbReference type="SUPFAM" id="SSF101353">
    <property type="entry name" value="Putative anticodon-binding domain of alanyl-tRNA synthetase (AlaRS)"/>
    <property type="match status" value="1"/>
</dbReference>
<dbReference type="SUPFAM" id="SSF55186">
    <property type="entry name" value="ThrRS/AlaRS common domain"/>
    <property type="match status" value="1"/>
</dbReference>
<dbReference type="SUPFAM" id="SSF50447">
    <property type="entry name" value="Translation proteins"/>
    <property type="match status" value="1"/>
</dbReference>
<dbReference type="PROSITE" id="PS50860">
    <property type="entry name" value="AA_TRNA_LIGASE_II_ALA"/>
    <property type="match status" value="1"/>
</dbReference>
<gene>
    <name evidence="1" type="primary">alaS</name>
    <name type="ordered locus">Tcr_1590</name>
</gene>
<organism>
    <name type="scientific">Hydrogenovibrio crunogenus (strain DSM 25203 / XCL-2)</name>
    <name type="common">Thiomicrospira crunogena</name>
    <dbReference type="NCBI Taxonomy" id="317025"/>
    <lineage>
        <taxon>Bacteria</taxon>
        <taxon>Pseudomonadati</taxon>
        <taxon>Pseudomonadota</taxon>
        <taxon>Gammaproteobacteria</taxon>
        <taxon>Thiotrichales</taxon>
        <taxon>Piscirickettsiaceae</taxon>
        <taxon>Hydrogenovibrio</taxon>
    </lineage>
</organism>
<feature type="chain" id="PRO_0000347854" description="Alanine--tRNA ligase">
    <location>
        <begin position="1"/>
        <end position="864"/>
    </location>
</feature>
<feature type="region of interest" description="Disordered" evidence="2">
    <location>
        <begin position="828"/>
        <end position="847"/>
    </location>
</feature>
<feature type="binding site" evidence="1">
    <location>
        <position position="553"/>
    </location>
    <ligand>
        <name>Zn(2+)</name>
        <dbReference type="ChEBI" id="CHEBI:29105"/>
    </ligand>
</feature>
<feature type="binding site" evidence="1">
    <location>
        <position position="557"/>
    </location>
    <ligand>
        <name>Zn(2+)</name>
        <dbReference type="ChEBI" id="CHEBI:29105"/>
    </ligand>
</feature>
<feature type="binding site" evidence="1">
    <location>
        <position position="655"/>
    </location>
    <ligand>
        <name>Zn(2+)</name>
        <dbReference type="ChEBI" id="CHEBI:29105"/>
    </ligand>
</feature>
<feature type="binding site" evidence="1">
    <location>
        <position position="659"/>
    </location>
    <ligand>
        <name>Zn(2+)</name>
        <dbReference type="ChEBI" id="CHEBI:29105"/>
    </ligand>
</feature>
<keyword id="KW-0030">Aminoacyl-tRNA synthetase</keyword>
<keyword id="KW-0067">ATP-binding</keyword>
<keyword id="KW-0963">Cytoplasm</keyword>
<keyword id="KW-0436">Ligase</keyword>
<keyword id="KW-0479">Metal-binding</keyword>
<keyword id="KW-0547">Nucleotide-binding</keyword>
<keyword id="KW-0648">Protein biosynthesis</keyword>
<keyword id="KW-0694">RNA-binding</keyword>
<keyword id="KW-0820">tRNA-binding</keyword>
<keyword id="KW-0862">Zinc</keyword>
<evidence type="ECO:0000255" key="1">
    <source>
        <dbReference type="HAMAP-Rule" id="MF_00036"/>
    </source>
</evidence>
<evidence type="ECO:0000256" key="2">
    <source>
        <dbReference type="SAM" id="MobiDB-lite"/>
    </source>
</evidence>
<accession>Q31F91</accession>
<sequence length="864" mass="94756">MTSAELRKAFLDFFVKQGHTAVHSSPVVPGNDPTLLFTNAGMVQFKETFLGQETREYKRATSVQRCIRAGGKHNDLENVGYTARHHTFFEMLGNFSFGDYFKREAIQYAWTFLTEELGLPEEKLWITVFEEDREAEDIWLKEMGVSAERFSRCGAKDNFWSMGDTGPCGPCSEIFYDHGADVAGGPPGSPDEDGDRYIEIWNLVFMQFDRSEDGTLTPLPKPSVDTGMGLERLAAVMQNQHNNYDIDLFQAIVKKASELTGEKDLANSSLRVIADHIRSCAFMVVDGVLPSNEGRGYVLRRIIRRAIRHGYKLGQTDIFFYQLVPTLVEQMGEAYPELVKEQANVERALKLEEERFAETLENGMKILEEDIAQLSGSVISGSTAFKLYDTYGFPLDLTADVARERNLSVDEAGFEQEMEAQRARARSASNFGAQSKNKVDYTGSTHFIGYEQDEAEAEIAAIFVDNVSVEKASEGQEAIVILNQTPFYAESGGQVGDQGSLTEGMNSFHVDNCQKQGAAFLHIGKVTAGSISVGQTILAHIDVKARRASERNHSATHLLHAALRTVLGTHVGQKGSLVQPERLRFDFSHFEPISAEQLLEIEQLVNHNIMLNAQVMMEEMDIEAAKAKGAMALFGEKYGDVVRVVDMGDFSIELCGGTHVNWTGEIGPFRITSESGIASGVRRIEAVTGEAAWQTIYDMEKSLLNIAANLKTDKPQVESKVAQLVTEQKELEKQLKQLQSKLASSQGDDLASSVTEVNGVNVLAAELEGADVNTLRETLDKLRDKLEPAAIVLAAVDGDKVSLVAGVSKSITGNVKAGELVNHVAQQVGGKGGGRPDMAQAGGKDPSKLKEALASVKEWVATVA</sequence>
<comment type="function">
    <text evidence="1">Catalyzes the attachment of alanine to tRNA(Ala) in a two-step reaction: alanine is first activated by ATP to form Ala-AMP and then transferred to the acceptor end of tRNA(Ala). Also edits incorrectly charged Ser-tRNA(Ala) and Gly-tRNA(Ala) via its editing domain.</text>
</comment>
<comment type="catalytic activity">
    <reaction evidence="1">
        <text>tRNA(Ala) + L-alanine + ATP = L-alanyl-tRNA(Ala) + AMP + diphosphate</text>
        <dbReference type="Rhea" id="RHEA:12540"/>
        <dbReference type="Rhea" id="RHEA-COMP:9657"/>
        <dbReference type="Rhea" id="RHEA-COMP:9923"/>
        <dbReference type="ChEBI" id="CHEBI:30616"/>
        <dbReference type="ChEBI" id="CHEBI:33019"/>
        <dbReference type="ChEBI" id="CHEBI:57972"/>
        <dbReference type="ChEBI" id="CHEBI:78442"/>
        <dbReference type="ChEBI" id="CHEBI:78497"/>
        <dbReference type="ChEBI" id="CHEBI:456215"/>
        <dbReference type="EC" id="6.1.1.7"/>
    </reaction>
</comment>
<comment type="cofactor">
    <cofactor evidence="1">
        <name>Zn(2+)</name>
        <dbReference type="ChEBI" id="CHEBI:29105"/>
    </cofactor>
    <text evidence="1">Binds 1 zinc ion per subunit.</text>
</comment>
<comment type="subcellular location">
    <subcellularLocation>
        <location evidence="1">Cytoplasm</location>
    </subcellularLocation>
</comment>
<comment type="domain">
    <text evidence="1">Consists of three domains; the N-terminal catalytic domain, the editing domain and the C-terminal C-Ala domain. The editing domain removes incorrectly charged amino acids, while the C-Ala domain, along with tRNA(Ala), serves as a bridge to cooperatively bring together the editing and aminoacylation centers thus stimulating deacylation of misacylated tRNAs.</text>
</comment>
<comment type="similarity">
    <text evidence="1">Belongs to the class-II aminoacyl-tRNA synthetase family.</text>
</comment>
<name>SYA_HYDCU</name>
<proteinExistence type="inferred from homology"/>
<protein>
    <recommendedName>
        <fullName evidence="1">Alanine--tRNA ligase</fullName>
        <ecNumber evidence="1">6.1.1.7</ecNumber>
    </recommendedName>
    <alternativeName>
        <fullName evidence="1">Alanyl-tRNA synthetase</fullName>
        <shortName evidence="1">AlaRS</shortName>
    </alternativeName>
</protein>
<reference key="1">
    <citation type="journal article" date="2006" name="PLoS Biol.">
        <title>The genome of deep-sea vent chemolithoautotroph Thiomicrospira crunogena XCL-2.</title>
        <authorList>
            <person name="Scott K.M."/>
            <person name="Sievert S.M."/>
            <person name="Abril F.N."/>
            <person name="Ball L.A."/>
            <person name="Barrett C.J."/>
            <person name="Blake R.A."/>
            <person name="Boller A.J."/>
            <person name="Chain P.S.G."/>
            <person name="Clark J.A."/>
            <person name="Davis C.R."/>
            <person name="Detter C."/>
            <person name="Do K.F."/>
            <person name="Dobrinski K.P."/>
            <person name="Faza B.I."/>
            <person name="Fitzpatrick K.A."/>
            <person name="Freyermuth S.K."/>
            <person name="Harmer T.L."/>
            <person name="Hauser L.J."/>
            <person name="Huegler M."/>
            <person name="Kerfeld C.A."/>
            <person name="Klotz M.G."/>
            <person name="Kong W.W."/>
            <person name="Land M."/>
            <person name="Lapidus A."/>
            <person name="Larimer F.W."/>
            <person name="Longo D.L."/>
            <person name="Lucas S."/>
            <person name="Malfatti S.A."/>
            <person name="Massey S.E."/>
            <person name="Martin D.D."/>
            <person name="McCuddin Z."/>
            <person name="Meyer F."/>
            <person name="Moore J.L."/>
            <person name="Ocampo L.H. Jr."/>
            <person name="Paul J.H."/>
            <person name="Paulsen I.T."/>
            <person name="Reep D.K."/>
            <person name="Ren Q."/>
            <person name="Ross R.L."/>
            <person name="Sato P.Y."/>
            <person name="Thomas P."/>
            <person name="Tinkham L.E."/>
            <person name="Zeruth G.T."/>
        </authorList>
    </citation>
    <scope>NUCLEOTIDE SEQUENCE [LARGE SCALE GENOMIC DNA]</scope>
    <source>
        <strain>DSM 25203 / XCL-2</strain>
    </source>
</reference>